<comment type="function">
    <text evidence="1">Co-chaperone involved in the maturation of iron-sulfur cluster-containing proteins. Seems to help targeting proteins to be folded toward HscA.</text>
</comment>
<comment type="subunit">
    <text evidence="1">Interacts with HscA and stimulates its ATPase activity.</text>
</comment>
<comment type="similarity">
    <text evidence="1">Belongs to the HscB family.</text>
</comment>
<accession>B8E9D5</accession>
<protein>
    <recommendedName>
        <fullName evidence="1">Co-chaperone protein HscB homolog</fullName>
    </recommendedName>
</protein>
<reference key="1">
    <citation type="submission" date="2008-12" db="EMBL/GenBank/DDBJ databases">
        <title>Complete sequence of chromosome of Shewanella baltica OS223.</title>
        <authorList>
            <consortium name="US DOE Joint Genome Institute"/>
            <person name="Lucas S."/>
            <person name="Copeland A."/>
            <person name="Lapidus A."/>
            <person name="Glavina del Rio T."/>
            <person name="Dalin E."/>
            <person name="Tice H."/>
            <person name="Bruce D."/>
            <person name="Goodwin L."/>
            <person name="Pitluck S."/>
            <person name="Chertkov O."/>
            <person name="Meincke L."/>
            <person name="Brettin T."/>
            <person name="Detter J.C."/>
            <person name="Han C."/>
            <person name="Kuske C.R."/>
            <person name="Larimer F."/>
            <person name="Land M."/>
            <person name="Hauser L."/>
            <person name="Kyrpides N."/>
            <person name="Ovchinnikova G."/>
            <person name="Brettar I."/>
            <person name="Rodrigues J."/>
            <person name="Konstantinidis K."/>
            <person name="Tiedje J."/>
        </authorList>
    </citation>
    <scope>NUCLEOTIDE SEQUENCE [LARGE SCALE GENOMIC DNA]</scope>
    <source>
        <strain>OS223</strain>
    </source>
</reference>
<keyword id="KW-0143">Chaperone</keyword>
<evidence type="ECO:0000255" key="1">
    <source>
        <dbReference type="HAMAP-Rule" id="MF_00682"/>
    </source>
</evidence>
<organism>
    <name type="scientific">Shewanella baltica (strain OS223)</name>
    <dbReference type="NCBI Taxonomy" id="407976"/>
    <lineage>
        <taxon>Bacteria</taxon>
        <taxon>Pseudomonadati</taxon>
        <taxon>Pseudomonadota</taxon>
        <taxon>Gammaproteobacteria</taxon>
        <taxon>Alteromonadales</taxon>
        <taxon>Shewanellaceae</taxon>
        <taxon>Shewanella</taxon>
    </lineage>
</organism>
<feature type="chain" id="PRO_1000189916" description="Co-chaperone protein HscB homolog">
    <location>
        <begin position="1"/>
        <end position="174"/>
    </location>
</feature>
<feature type="domain" description="J" evidence="1">
    <location>
        <begin position="2"/>
        <end position="74"/>
    </location>
</feature>
<gene>
    <name evidence="1" type="primary">hscB</name>
    <name type="ordered locus">Sbal223_1964</name>
</gene>
<name>HSCB_SHEB2</name>
<dbReference type="EMBL" id="CP001252">
    <property type="protein sequence ID" value="ACK46468.1"/>
    <property type="molecule type" value="Genomic_DNA"/>
</dbReference>
<dbReference type="RefSeq" id="WP_012587531.1">
    <property type="nucleotide sequence ID" value="NC_011663.1"/>
</dbReference>
<dbReference type="SMR" id="B8E9D5"/>
<dbReference type="KEGG" id="sbp:Sbal223_1964"/>
<dbReference type="HOGENOM" id="CLU_068529_2_0_6"/>
<dbReference type="Proteomes" id="UP000002507">
    <property type="component" value="Chromosome"/>
</dbReference>
<dbReference type="GO" id="GO:1990230">
    <property type="term" value="C:iron-sulfur cluster transfer complex"/>
    <property type="evidence" value="ECO:0007669"/>
    <property type="project" value="TreeGrafter"/>
</dbReference>
<dbReference type="GO" id="GO:0001671">
    <property type="term" value="F:ATPase activator activity"/>
    <property type="evidence" value="ECO:0007669"/>
    <property type="project" value="InterPro"/>
</dbReference>
<dbReference type="GO" id="GO:0051087">
    <property type="term" value="F:protein-folding chaperone binding"/>
    <property type="evidence" value="ECO:0007669"/>
    <property type="project" value="InterPro"/>
</dbReference>
<dbReference type="GO" id="GO:0044571">
    <property type="term" value="P:[2Fe-2S] cluster assembly"/>
    <property type="evidence" value="ECO:0007669"/>
    <property type="project" value="InterPro"/>
</dbReference>
<dbReference type="GO" id="GO:0051259">
    <property type="term" value="P:protein complex oligomerization"/>
    <property type="evidence" value="ECO:0007669"/>
    <property type="project" value="InterPro"/>
</dbReference>
<dbReference type="GO" id="GO:0006457">
    <property type="term" value="P:protein folding"/>
    <property type="evidence" value="ECO:0007669"/>
    <property type="project" value="UniProtKB-UniRule"/>
</dbReference>
<dbReference type="CDD" id="cd06257">
    <property type="entry name" value="DnaJ"/>
    <property type="match status" value="1"/>
</dbReference>
<dbReference type="Gene3D" id="1.10.287.110">
    <property type="entry name" value="DnaJ domain"/>
    <property type="match status" value="1"/>
</dbReference>
<dbReference type="Gene3D" id="1.20.1280.20">
    <property type="entry name" value="HscB, C-terminal domain"/>
    <property type="match status" value="1"/>
</dbReference>
<dbReference type="HAMAP" id="MF_00682">
    <property type="entry name" value="HscB"/>
    <property type="match status" value="1"/>
</dbReference>
<dbReference type="InterPro" id="IPR001623">
    <property type="entry name" value="DnaJ_domain"/>
</dbReference>
<dbReference type="InterPro" id="IPR004640">
    <property type="entry name" value="HscB"/>
</dbReference>
<dbReference type="InterPro" id="IPR036386">
    <property type="entry name" value="HscB_C_sf"/>
</dbReference>
<dbReference type="InterPro" id="IPR009073">
    <property type="entry name" value="HscB_oligo_C"/>
</dbReference>
<dbReference type="InterPro" id="IPR036869">
    <property type="entry name" value="J_dom_sf"/>
</dbReference>
<dbReference type="NCBIfam" id="TIGR00714">
    <property type="entry name" value="hscB"/>
    <property type="match status" value="1"/>
</dbReference>
<dbReference type="NCBIfam" id="NF003449">
    <property type="entry name" value="PRK05014.1"/>
    <property type="match status" value="1"/>
</dbReference>
<dbReference type="PANTHER" id="PTHR14021">
    <property type="entry name" value="IRON-SULFUR CLUSTER CO-CHAPERONE PROTEIN HSCB"/>
    <property type="match status" value="1"/>
</dbReference>
<dbReference type="PANTHER" id="PTHR14021:SF15">
    <property type="entry name" value="IRON-SULFUR CLUSTER CO-CHAPERONE PROTEIN HSCB"/>
    <property type="match status" value="1"/>
</dbReference>
<dbReference type="Pfam" id="PF07743">
    <property type="entry name" value="HSCB_C"/>
    <property type="match status" value="1"/>
</dbReference>
<dbReference type="SMART" id="SM00271">
    <property type="entry name" value="DnaJ"/>
    <property type="match status" value="1"/>
</dbReference>
<dbReference type="SUPFAM" id="SSF46565">
    <property type="entry name" value="Chaperone J-domain"/>
    <property type="match status" value="1"/>
</dbReference>
<dbReference type="SUPFAM" id="SSF47144">
    <property type="entry name" value="HSC20 (HSCB), C-terminal oligomerisation domain"/>
    <property type="match status" value="1"/>
</dbReference>
<dbReference type="PROSITE" id="PS50076">
    <property type="entry name" value="DNAJ_2"/>
    <property type="match status" value="1"/>
</dbReference>
<sequence length="174" mass="20254">MNYFELFKFSPAFDIDTALLAERYRELQRAVHPDKFANDTEQQKLLSVQRTAQVNDGFQTLKDPIRRAEHMLSLRGIELSHETTTVKDTGFLMQQMEWREALEDIRDSDDPQASIDELYQSFAQYRAQLTQQLTQLLTSEQAEDALLAADQVRKLKFMAKLHDELTRVEDALLD</sequence>
<proteinExistence type="inferred from homology"/>